<gene>
    <name type="primary">DYNLL1</name>
    <name type="synonym">DNCL1</name>
    <name type="ORF">QflA-14782</name>
    <name type="ORF">QtsA-15114</name>
</gene>
<proteinExistence type="inferred from homology"/>
<feature type="chain" id="PRO_0000195126" description="Dynein light chain 1, cytoplasmic">
    <location>
        <begin position="1"/>
        <end position="89"/>
    </location>
</feature>
<feature type="region of interest" description="Interaction with ESR1" evidence="1">
    <location>
        <begin position="67"/>
        <end position="89"/>
    </location>
</feature>
<feature type="modified residue" description="N6-acetyllysine" evidence="3">
    <location>
        <position position="36"/>
    </location>
</feature>
<feature type="modified residue" description="Phosphoserine" evidence="3">
    <location>
        <position position="88"/>
    </location>
</feature>
<feature type="cross-link" description="Glycyl lysine isopeptide (Lys-Gly) (interchain with G-Cter in SUMO2)" evidence="3">
    <location>
        <position position="43"/>
    </location>
</feature>
<comment type="function">
    <text evidence="2 3 5">Acts as one of several non-catalytic accessory components of the cytoplasmic dynein 1 complex that are thought to be involved in linking dynein to cargos and to adapter proteins that regulate dynein function. Cytoplasmic dynein 1 acts as a motor for the intracellular retrograde motility of vesicles and organelles along microtubules. May play a role in changing or maintaining the spatial distribution of cytoskeletal structures (By similarity). In addition to its role in cytoskeleton and transport, acts as a protein-protein adapter, which inhibits and/or sequesters target proteins. Involved in the response to DNA damage by acting as a key regulator of DNA end resection: when phosphorylated at Ser-88, recruited to DNA double-strand breaks (DSBs) by TP53BP1 and acts by disrupting MRE11 dimerization, thereby inhibiting DNA end resection. In a subset of DSBs, DYNLL1 remains unphosphorylated and promotes the recruitment of the Shieldin complex (By similarity). Binds and inhibits the catalytic activity of neuronal nitric oxide synthase/NOS1 (By similarity). Promotes transactivation functions of ESR1 and plays a role in the nuclear localization of ESR1. Regulates apoptotic activities of BCL2L11 by sequestering it to microtubules. Upon apoptotic stimuli the BCL2L11-DYNLL1 complex dissociates from cytoplasmic dynein and translocates to mitochondria and sequesters BCL2 thus neutralizing its antiapoptotic activity (By similarity).</text>
</comment>
<comment type="subunit">
    <text evidence="2 3 4 5">Homodimer. Monomer; the monomeric form is incapable of binding to target proteins (By similarity). The cytoplasmic dynein 1 complex consists of two catalytic heavy chains (HCs) and a number of non-catalytic subunits presented by intermediate chains (ICs), light intermediate chains (LICs) and light chains (LCs); the composition seems to vary in respect to the IC, LIC and LC composition (By similarity). The heavy chain homodimer serves as a scaffold for the probable homodimeric assembly of the respective non-catalytic subunits (By similarity). The ICs and LICs bind directly to the HC dimer and the LCs assemble on the IC dimer (By similarity). Interacts with TXNDC17. Interacts with WWC1 and ESR1. The WWC1-DYNLL1 interaction is mandatory for the recruitment and transactivation functions of ESR1 or DYNLL1 to the target chromatin. Interacts with BCL2L11. Interacts with BCL2; the interaction is greatly enhanced in the nucleus and in mitochondria upon induction of apoptosis. Interacts with PAK1; the interaction requires dimeric DYNLL1. Interacts with MYZAP. Part of an astrin (SPAG5)-kinastrin (SKAP) complex containing KNSTRN, SPAG5, PLK1, DYNLL1 and SGO2. Interacts with ATMIN; this interaction inhibits ATMIN transcriptional activity and hence may play a role in a feedback loop whereby DYNLL1 inhibits transactivation of its own promoter by ATMIN. Interacts with NEK9 (not phosphorylated at 'Ser-944') (By similarity). Interacts with BICD2 (By similarity). Interacts with BCAS1 (By similarity). Interacts with Basson/BSN. Interacts with HDAC6. Interacts with TPPP. Interacts with AMBRA1 (via TQT motifs); tethering AMBRA1 to the cytoskeleton. Interacts with FAM83D/CHICA (via C-terminus). Interacts with HMMR, SPAG5/Astrin and KNSTRN/Kinastrin. Interacts with TLK2 (By similarity). Interacts with NOS1 (By similarity). Interacts with WWC1, WWC2 and WWC3. Interacts with MRE11; inhibiting MRE11 homodimerization and activity (By similarity).</text>
</comment>
<comment type="subcellular location">
    <subcellularLocation>
        <location evidence="3">Cytoplasm</location>
        <location evidence="3">Cytoskeleton</location>
        <location evidence="3">Microtubule organizing center</location>
        <location evidence="3">Centrosome</location>
    </subcellularLocation>
    <subcellularLocation>
        <location evidence="3">Chromosome</location>
    </subcellularLocation>
    <subcellularLocation>
        <location evidence="3">Cytoplasm</location>
        <location evidence="3">Cytoskeleton</location>
    </subcellularLocation>
    <subcellularLocation>
        <location evidence="3">Nucleus</location>
    </subcellularLocation>
    <subcellularLocation>
        <location evidence="3">Mitochondrion</location>
    </subcellularLocation>
    <text evidence="3">Upon induction of apoptosis translocates together with BCL2L11 to mitochondria. Recruited to DNA double-strand breaks (DSBs) by TP53BP1 when phosphorylated at Ser-88.</text>
</comment>
<comment type="PTM">
    <text evidence="3">Phosphorylation at Ser-88 promotes recruitment to DNA double-strand breaks (DSBs) by TP53BP1 and ability to inhibit MRE11.</text>
</comment>
<comment type="similarity">
    <text evidence="6">Belongs to the dynein light chain family.</text>
</comment>
<organism>
    <name type="scientific">Macaca fascicularis</name>
    <name type="common">Crab-eating macaque</name>
    <name type="synonym">Cynomolgus monkey</name>
    <dbReference type="NCBI Taxonomy" id="9541"/>
    <lineage>
        <taxon>Eukaryota</taxon>
        <taxon>Metazoa</taxon>
        <taxon>Chordata</taxon>
        <taxon>Craniata</taxon>
        <taxon>Vertebrata</taxon>
        <taxon>Euteleostomi</taxon>
        <taxon>Mammalia</taxon>
        <taxon>Eutheria</taxon>
        <taxon>Euarchontoglires</taxon>
        <taxon>Primates</taxon>
        <taxon>Haplorrhini</taxon>
        <taxon>Catarrhini</taxon>
        <taxon>Cercopithecidae</taxon>
        <taxon>Cercopithecinae</taxon>
        <taxon>Macaca</taxon>
    </lineage>
</organism>
<accession>P61273</accession>
<accession>Q4R7J2</accession>
<dbReference type="EMBL" id="AB056397">
    <property type="protein sequence ID" value="BAB33053.1"/>
    <property type="molecule type" value="mRNA"/>
</dbReference>
<dbReference type="EMBL" id="AB168826">
    <property type="protein sequence ID" value="BAE00930.1"/>
    <property type="molecule type" value="mRNA"/>
</dbReference>
<dbReference type="RefSeq" id="XP_005572459.1">
    <property type="nucleotide sequence ID" value="XM_005572402.3"/>
</dbReference>
<dbReference type="RefSeq" id="XP_005572460.1">
    <property type="nucleotide sequence ID" value="XM_005572403.3"/>
</dbReference>
<dbReference type="BMRB" id="P61273"/>
<dbReference type="SMR" id="P61273"/>
<dbReference type="STRING" id="9541.ENSMFAP00000015490"/>
<dbReference type="Ensembl" id="ENSMFAT00000066017.2">
    <property type="protein sequence ID" value="ENSMFAP00000015490.1"/>
    <property type="gene ID" value="ENSMFAG00000030961.2"/>
</dbReference>
<dbReference type="GeneID" id="101866391"/>
<dbReference type="KEGG" id="mcf:101866391"/>
<dbReference type="CTD" id="8655"/>
<dbReference type="VEuPathDB" id="HostDB:ENSMFAG00000030961"/>
<dbReference type="eggNOG" id="KOG3430">
    <property type="taxonomic scope" value="Eukaryota"/>
</dbReference>
<dbReference type="GeneTree" id="ENSGT00390000000378"/>
<dbReference type="OMA" id="THEKHCF"/>
<dbReference type="OrthoDB" id="761at314294"/>
<dbReference type="Proteomes" id="UP000233100">
    <property type="component" value="Chromosome 11"/>
</dbReference>
<dbReference type="Bgee" id="ENSMFAG00000030961">
    <property type="expression patterns" value="Expressed in frontal cortex and 13 other cell types or tissues"/>
</dbReference>
<dbReference type="GO" id="GO:0005813">
    <property type="term" value="C:centrosome"/>
    <property type="evidence" value="ECO:0007669"/>
    <property type="project" value="UniProtKB-SubCell"/>
</dbReference>
<dbReference type="GO" id="GO:0005929">
    <property type="term" value="C:cilium"/>
    <property type="evidence" value="ECO:0007669"/>
    <property type="project" value="GOC"/>
</dbReference>
<dbReference type="GO" id="GO:0008180">
    <property type="term" value="C:COP9 signalosome"/>
    <property type="evidence" value="ECO:0007669"/>
    <property type="project" value="Ensembl"/>
</dbReference>
<dbReference type="GO" id="GO:0005868">
    <property type="term" value="C:cytoplasmic dynein complex"/>
    <property type="evidence" value="ECO:0000250"/>
    <property type="project" value="UniProtKB"/>
</dbReference>
<dbReference type="GO" id="GO:0005856">
    <property type="term" value="C:cytoskeleton"/>
    <property type="evidence" value="ECO:0000250"/>
    <property type="project" value="UniProtKB"/>
</dbReference>
<dbReference type="GO" id="GO:0000776">
    <property type="term" value="C:kinetochore"/>
    <property type="evidence" value="ECO:0000250"/>
    <property type="project" value="UniProtKB"/>
</dbReference>
<dbReference type="GO" id="GO:0005874">
    <property type="term" value="C:microtubule"/>
    <property type="evidence" value="ECO:0007669"/>
    <property type="project" value="UniProtKB-KW"/>
</dbReference>
<dbReference type="GO" id="GO:0005739">
    <property type="term" value="C:mitochondrion"/>
    <property type="evidence" value="ECO:0007669"/>
    <property type="project" value="UniProtKB-SubCell"/>
</dbReference>
<dbReference type="GO" id="GO:0072686">
    <property type="term" value="C:mitotic spindle"/>
    <property type="evidence" value="ECO:0000250"/>
    <property type="project" value="UniProtKB"/>
</dbReference>
<dbReference type="GO" id="GO:0035861">
    <property type="term" value="C:site of double-strand break"/>
    <property type="evidence" value="ECO:0000250"/>
    <property type="project" value="UniProtKB"/>
</dbReference>
<dbReference type="GO" id="GO:0060703">
    <property type="term" value="F:deoxyribonuclease inhibitor activity"/>
    <property type="evidence" value="ECO:0007669"/>
    <property type="project" value="Ensembl"/>
</dbReference>
<dbReference type="GO" id="GO:0045505">
    <property type="term" value="F:dynein intermediate chain binding"/>
    <property type="evidence" value="ECO:0007669"/>
    <property type="project" value="TreeGrafter"/>
</dbReference>
<dbReference type="GO" id="GO:0004857">
    <property type="term" value="F:enzyme inhibitor activity"/>
    <property type="evidence" value="ECO:0000250"/>
    <property type="project" value="UniProtKB"/>
</dbReference>
<dbReference type="GO" id="GO:0006915">
    <property type="term" value="P:apoptotic process"/>
    <property type="evidence" value="ECO:0007669"/>
    <property type="project" value="UniProtKB-KW"/>
</dbReference>
<dbReference type="GO" id="GO:0006974">
    <property type="term" value="P:DNA damage response"/>
    <property type="evidence" value="ECO:0007669"/>
    <property type="project" value="UniProtKB-KW"/>
</dbReference>
<dbReference type="GO" id="GO:0035721">
    <property type="term" value="P:intraciliary retrograde transport"/>
    <property type="evidence" value="ECO:0007669"/>
    <property type="project" value="TreeGrafter"/>
</dbReference>
<dbReference type="GO" id="GO:0044458">
    <property type="term" value="P:motile cilium assembly"/>
    <property type="evidence" value="ECO:0007669"/>
    <property type="project" value="TreeGrafter"/>
</dbReference>
<dbReference type="GO" id="GO:0110027">
    <property type="term" value="P:negative regulation of DNA strand resection involved in replication fork processing"/>
    <property type="evidence" value="ECO:0000250"/>
    <property type="project" value="UniProtKB"/>
</dbReference>
<dbReference type="CDD" id="cd21452">
    <property type="entry name" value="DLC-like_DYNLL1_DYNLL2"/>
    <property type="match status" value="1"/>
</dbReference>
<dbReference type="FunFam" id="3.30.740.10:FF:000001">
    <property type="entry name" value="Dynein light chain"/>
    <property type="match status" value="1"/>
</dbReference>
<dbReference type="Gene3D" id="3.30.740.10">
    <property type="entry name" value="Protein Inhibitor Of Neuronal Nitric Oxide Synthase"/>
    <property type="match status" value="1"/>
</dbReference>
<dbReference type="InterPro" id="IPR037177">
    <property type="entry name" value="DLC_sf"/>
</dbReference>
<dbReference type="InterPro" id="IPR019763">
    <property type="entry name" value="Dynein_light_1/2_CS"/>
</dbReference>
<dbReference type="InterPro" id="IPR001372">
    <property type="entry name" value="Dynein_light_chain_typ-1/2"/>
</dbReference>
<dbReference type="PANTHER" id="PTHR11886">
    <property type="entry name" value="DYNEIN LIGHT CHAIN"/>
    <property type="match status" value="1"/>
</dbReference>
<dbReference type="PANTHER" id="PTHR11886:SF91">
    <property type="entry name" value="DYNEIN LIGHT CHAIN 1, CYTOPLASMIC"/>
    <property type="match status" value="1"/>
</dbReference>
<dbReference type="Pfam" id="PF01221">
    <property type="entry name" value="Dynein_light"/>
    <property type="match status" value="1"/>
</dbReference>
<dbReference type="SMART" id="SM01375">
    <property type="entry name" value="Dynein_light"/>
    <property type="match status" value="1"/>
</dbReference>
<dbReference type="SUPFAM" id="SSF54648">
    <property type="entry name" value="DLC"/>
    <property type="match status" value="1"/>
</dbReference>
<dbReference type="PROSITE" id="PS01239">
    <property type="entry name" value="DYNEIN_LIGHT_1"/>
    <property type="match status" value="1"/>
</dbReference>
<reference key="1">
    <citation type="submission" date="2001-02" db="EMBL/GenBank/DDBJ databases">
        <title>Isolation of full-length cDNA clones from macaque brain cDNA libraries.</title>
        <authorList>
            <person name="Osada N."/>
            <person name="Hida M."/>
            <person name="Kusuda J."/>
            <person name="Tanuma R."/>
            <person name="Iseki K."/>
            <person name="Hirai M."/>
            <person name="Terao K."/>
            <person name="Suzuki Y."/>
            <person name="Sugano S."/>
            <person name="Hashimoto K."/>
        </authorList>
    </citation>
    <scope>NUCLEOTIDE SEQUENCE [LARGE SCALE MRNA]</scope>
    <source>
        <tissue>Frontal cortex</tissue>
    </source>
</reference>
<reference key="2">
    <citation type="submission" date="2005-06" db="EMBL/GenBank/DDBJ databases">
        <title>DNA sequences of macaque genes expressed in brain or testis and its evolutionary implications.</title>
        <authorList>
            <consortium name="International consortium for macaque cDNA sequencing and analysis"/>
        </authorList>
    </citation>
    <scope>NUCLEOTIDE SEQUENCE [LARGE SCALE MRNA]</scope>
    <source>
        <tissue>Testis</tissue>
    </source>
</reference>
<keyword id="KW-0007">Acetylation</keyword>
<keyword id="KW-0010">Activator</keyword>
<keyword id="KW-0053">Apoptosis</keyword>
<keyword id="KW-0158">Chromosome</keyword>
<keyword id="KW-0963">Cytoplasm</keyword>
<keyword id="KW-0206">Cytoskeleton</keyword>
<keyword id="KW-0227">DNA damage</keyword>
<keyword id="KW-0243">Dynein</keyword>
<keyword id="KW-1017">Isopeptide bond</keyword>
<keyword id="KW-0493">Microtubule</keyword>
<keyword id="KW-0496">Mitochondrion</keyword>
<keyword id="KW-0505">Motor protein</keyword>
<keyword id="KW-0539">Nucleus</keyword>
<keyword id="KW-0597">Phosphoprotein</keyword>
<keyword id="KW-1185">Reference proteome</keyword>
<keyword id="KW-0804">Transcription</keyword>
<keyword id="KW-0805">Transcription regulation</keyword>
<keyword id="KW-0813">Transport</keyword>
<keyword id="KW-0832">Ubl conjugation</keyword>
<evidence type="ECO:0000250" key="1"/>
<evidence type="ECO:0000250" key="2">
    <source>
        <dbReference type="UniProtKB" id="P61285"/>
    </source>
</evidence>
<evidence type="ECO:0000250" key="3">
    <source>
        <dbReference type="UniProtKB" id="P63167"/>
    </source>
</evidence>
<evidence type="ECO:0000250" key="4">
    <source>
        <dbReference type="UniProtKB" id="P63168"/>
    </source>
</evidence>
<evidence type="ECO:0000250" key="5">
    <source>
        <dbReference type="UniProtKB" id="P63170"/>
    </source>
</evidence>
<evidence type="ECO:0000305" key="6"/>
<name>DYL1_MACFA</name>
<sequence>MCDRKAVIKNADMSEEMQQDSVECATQALEKYNIEKDIAAHIKKEFDKKYNPTWHCIVGRNFGSYVTHETKHFIYFYLGQVAILLFKSG</sequence>
<protein>
    <recommendedName>
        <fullName>Dynein light chain 1, cytoplasmic</fullName>
    </recommendedName>
    <alternativeName>
        <fullName>Dynein light chain LC8-type 1</fullName>
    </alternativeName>
</protein>